<comment type="function">
    <text evidence="1">Peptide chain release factor 1 directs the termination of translation in response to the peptide chain termination codons UAG and UAA.</text>
</comment>
<comment type="subcellular location">
    <subcellularLocation>
        <location evidence="1">Cytoplasm</location>
    </subcellularLocation>
</comment>
<comment type="PTM">
    <text evidence="1">Methylated by PrmC. Methylation increases the termination efficiency of RF1.</text>
</comment>
<comment type="similarity">
    <text evidence="1">Belongs to the prokaryotic/mitochondrial release factor family.</text>
</comment>
<gene>
    <name evidence="1" type="primary">prfA</name>
    <name type="ordered locus">SH0917</name>
</gene>
<reference key="1">
    <citation type="journal article" date="2005" name="J. Bacteriol.">
        <title>Whole-genome sequencing of Staphylococcus haemolyticus uncovers the extreme plasticity of its genome and the evolution of human-colonizing staphylococcal species.</title>
        <authorList>
            <person name="Takeuchi F."/>
            <person name="Watanabe S."/>
            <person name="Baba T."/>
            <person name="Yuzawa H."/>
            <person name="Ito T."/>
            <person name="Morimoto Y."/>
            <person name="Kuroda M."/>
            <person name="Cui L."/>
            <person name="Takahashi M."/>
            <person name="Ankai A."/>
            <person name="Baba S."/>
            <person name="Fukui S."/>
            <person name="Lee J.C."/>
            <person name="Hiramatsu K."/>
        </authorList>
    </citation>
    <scope>NUCLEOTIDE SEQUENCE [LARGE SCALE GENOMIC DNA]</scope>
    <source>
        <strain>JCSC1435</strain>
    </source>
</reference>
<accession>Q4L7Z9</accession>
<proteinExistence type="inferred from homology"/>
<name>RF1_STAHJ</name>
<feature type="chain" id="PRO_0000263361" description="Peptide chain release factor 1">
    <location>
        <begin position="1"/>
        <end position="358"/>
    </location>
</feature>
<feature type="modified residue" description="N5-methylglutamine" evidence="1">
    <location>
        <position position="233"/>
    </location>
</feature>
<dbReference type="EMBL" id="AP006716">
    <property type="protein sequence ID" value="BAE04226.1"/>
    <property type="molecule type" value="Genomic_DNA"/>
</dbReference>
<dbReference type="RefSeq" id="WP_011275228.1">
    <property type="nucleotide sequence ID" value="NC_007168.1"/>
</dbReference>
<dbReference type="SMR" id="Q4L7Z9"/>
<dbReference type="GeneID" id="93780305"/>
<dbReference type="KEGG" id="sha:SH0917"/>
<dbReference type="eggNOG" id="COG0216">
    <property type="taxonomic scope" value="Bacteria"/>
</dbReference>
<dbReference type="HOGENOM" id="CLU_036856_0_1_9"/>
<dbReference type="OrthoDB" id="9806673at2"/>
<dbReference type="Proteomes" id="UP000000543">
    <property type="component" value="Chromosome"/>
</dbReference>
<dbReference type="GO" id="GO:0005737">
    <property type="term" value="C:cytoplasm"/>
    <property type="evidence" value="ECO:0007669"/>
    <property type="project" value="UniProtKB-SubCell"/>
</dbReference>
<dbReference type="GO" id="GO:0016149">
    <property type="term" value="F:translation release factor activity, codon specific"/>
    <property type="evidence" value="ECO:0007669"/>
    <property type="project" value="UniProtKB-UniRule"/>
</dbReference>
<dbReference type="FunFam" id="3.30.160.20:FF:000004">
    <property type="entry name" value="Peptide chain release factor 1"/>
    <property type="match status" value="1"/>
</dbReference>
<dbReference type="FunFam" id="3.30.70.1660:FF:000002">
    <property type="entry name" value="Peptide chain release factor 1"/>
    <property type="match status" value="1"/>
</dbReference>
<dbReference type="FunFam" id="3.30.70.1660:FF:000004">
    <property type="entry name" value="Peptide chain release factor 1"/>
    <property type="match status" value="1"/>
</dbReference>
<dbReference type="Gene3D" id="3.30.160.20">
    <property type="match status" value="1"/>
</dbReference>
<dbReference type="Gene3D" id="3.30.70.1660">
    <property type="match status" value="1"/>
</dbReference>
<dbReference type="Gene3D" id="6.10.140.1950">
    <property type="match status" value="1"/>
</dbReference>
<dbReference type="HAMAP" id="MF_00093">
    <property type="entry name" value="Rel_fac_1"/>
    <property type="match status" value="1"/>
</dbReference>
<dbReference type="InterPro" id="IPR005139">
    <property type="entry name" value="PCRF"/>
</dbReference>
<dbReference type="InterPro" id="IPR000352">
    <property type="entry name" value="Pep_chain_release_fac_I"/>
</dbReference>
<dbReference type="InterPro" id="IPR045853">
    <property type="entry name" value="Pep_chain_release_fac_I_sf"/>
</dbReference>
<dbReference type="InterPro" id="IPR050057">
    <property type="entry name" value="Prokaryotic/Mito_RF"/>
</dbReference>
<dbReference type="InterPro" id="IPR004373">
    <property type="entry name" value="RF-1"/>
</dbReference>
<dbReference type="NCBIfam" id="TIGR00019">
    <property type="entry name" value="prfA"/>
    <property type="match status" value="1"/>
</dbReference>
<dbReference type="NCBIfam" id="NF001859">
    <property type="entry name" value="PRK00591.1"/>
    <property type="match status" value="1"/>
</dbReference>
<dbReference type="PANTHER" id="PTHR43804">
    <property type="entry name" value="LD18447P"/>
    <property type="match status" value="1"/>
</dbReference>
<dbReference type="PANTHER" id="PTHR43804:SF7">
    <property type="entry name" value="LD18447P"/>
    <property type="match status" value="1"/>
</dbReference>
<dbReference type="Pfam" id="PF03462">
    <property type="entry name" value="PCRF"/>
    <property type="match status" value="1"/>
</dbReference>
<dbReference type="Pfam" id="PF00472">
    <property type="entry name" value="RF-1"/>
    <property type="match status" value="1"/>
</dbReference>
<dbReference type="SMART" id="SM00937">
    <property type="entry name" value="PCRF"/>
    <property type="match status" value="1"/>
</dbReference>
<dbReference type="SUPFAM" id="SSF75620">
    <property type="entry name" value="Release factor"/>
    <property type="match status" value="1"/>
</dbReference>
<dbReference type="PROSITE" id="PS00745">
    <property type="entry name" value="RF_PROK_I"/>
    <property type="match status" value="1"/>
</dbReference>
<keyword id="KW-0963">Cytoplasm</keyword>
<keyword id="KW-0488">Methylation</keyword>
<keyword id="KW-0648">Protein biosynthesis</keyword>
<sequence length="358" mass="40486">MFDQLDIVEERYEQLNEMLSDPEIVNDSDKLRKYSKEQADLQKTVDVYRDYKSKKEEIAEIDEMLNETEDKEEIEMLKEESASLKSAIPELEEQLKFLLIPKDPNDEKDVIVEIRAAAGGDEAAIFAGDLLRMYSKYAESQNFKTEIVEAAESDHGGYKEISFSVSGSGAYSKLKFENGAHRVQRVPETESGGRIHTSTATVAVLPEVEDVEIEIRNEDLKIDTYRSSGAGGQHVNTTDSAVRITHLPTGVIATSSEKSQIQNREKALKVLKARLYDMKLQEEQQKYAAQRKSAVGTGDRSERVRTYNYPQSRVTDHRIGLTLQKLDQIMEGKLDEIIDALTLSEQTEKLKELNNGEL</sequence>
<protein>
    <recommendedName>
        <fullName evidence="1">Peptide chain release factor 1</fullName>
        <shortName evidence="1">RF-1</shortName>
    </recommendedName>
</protein>
<organism>
    <name type="scientific">Staphylococcus haemolyticus (strain JCSC1435)</name>
    <dbReference type="NCBI Taxonomy" id="279808"/>
    <lineage>
        <taxon>Bacteria</taxon>
        <taxon>Bacillati</taxon>
        <taxon>Bacillota</taxon>
        <taxon>Bacilli</taxon>
        <taxon>Bacillales</taxon>
        <taxon>Staphylococcaceae</taxon>
        <taxon>Staphylococcus</taxon>
    </lineage>
</organism>
<evidence type="ECO:0000255" key="1">
    <source>
        <dbReference type="HAMAP-Rule" id="MF_00093"/>
    </source>
</evidence>